<name>NFAC2_HUMAN</name>
<gene>
    <name type="primary">NFATC2</name>
    <name type="synonym">NFAT1</name>
    <name type="synonym">NFATP</name>
</gene>
<accession>Q13469</accession>
<accession>B5B2N8</accession>
<accession>B5B2N9</accession>
<accession>B5B2P0</accession>
<accession>B5B2P2</accession>
<accession>B5B2P3</accession>
<accession>Q13468</accession>
<accession>Q5TFW7</accession>
<accession>Q5TFW8</accession>
<accession>Q9NPX6</accession>
<accession>Q9NQH3</accession>
<accession>Q9UJR2</accession>
<sequence>MNAPERQPQPDGGDAPGHEPGGSPQDELDFSILFDYEYLNPNEEEPNAHKVASPPSGPAYPDDVLDYGLKPYSPLASLSGEPPGRFGEPDRVGPQKFLSAAKPAGASGLSPRIEITPSHELIQAVGPLRMRDAGLLVEQPPLAGVAASPRFTLPVPGFEGYREPLCLSPASSGSSASFISDTFSPYTSPCVSPNNGGPDDLCPQFQNIPAHYSPRTSPIMSPRTSLAEDSCLGRHSPVPRPASRSSSPGAKRRHSCAEALVALPPGASPQRSRSPSPQPSSHVAPQDHGSPAGYPPVAGSAVIMDALNSLATDSPCGIPPKMWKTSPDPSPVSAAPSKAGLPRHIYPAVEFLGPCEQGERRNSAPESILLVPPTWPKPLVPAIPICSIPVTASLPPLEWPLSSQSGSYELRIEVQPKPHHRAHYETEGSRGAVKAPTGGHPVVQLHGYMENKPLGLQIFIGTADERILKPHAFYQVHRITGKTVTTTSYEKIVGNTKVLEIPLEPKNNMRATIDCAGILKLRNADIELRKGETDIGRKNTRVRLVFRVHIPESSGRIVSLQTASNPIECSQRSAHELPMVERQDTDSCLVYGGQQMILTGQNFTSESKVVFTEKTTDGQQIWEMEATVDKDKSQPNMLFVEIPEYRNKHIRTPVKVNFYVINGKRKRSQPQHFTYHPVPAIKTEPTDEYDPTLICSPTHGGLGSQPYYPQHPMVAESPSCLVATMAPCQQFRTGLSSPDARYQQQNPAAVLYQRSKSLSPSLLGYQQPALMAAPLSLADAHRSVLVHAGSQGQSSALLHPSPTNQQASPVIHYSPTNQQLRCGSHQEFQHIMYCENFAPGTTRPGPPPVSQGQRLSPGSYPTVIQQQNATSQRAAKNGPPVSDQKEVLPAGVTIKQEQNLDQTYLDDVNEIIRKEFSGPPARNQT</sequence>
<protein>
    <recommendedName>
        <fullName>Nuclear factor of activated T-cells, cytoplasmic 2</fullName>
        <shortName>NF-ATc2</shortName>
        <shortName>NFATc2</shortName>
    </recommendedName>
    <alternativeName>
        <fullName>NFAT pre-existing subunit</fullName>
        <shortName>NF-ATp</shortName>
    </alternativeName>
    <alternativeName>
        <fullName>T-cell transcription factor NFAT1</fullName>
    </alternativeName>
</protein>
<feature type="chain" id="PRO_0000205178" description="Nuclear factor of activated T-cells, cytoplasmic 2">
    <location>
        <begin position="1"/>
        <end position="925"/>
    </location>
</feature>
<feature type="repeat" description="1">
    <location>
        <begin position="184"/>
        <end position="200"/>
    </location>
</feature>
<feature type="repeat" description="2">
    <location>
        <begin position="213"/>
        <end position="229"/>
    </location>
</feature>
<feature type="repeat" description="3; approximate">
    <location>
        <begin position="272"/>
        <end position="286"/>
    </location>
</feature>
<feature type="domain" description="RHD" evidence="3">
    <location>
        <begin position="392"/>
        <end position="574"/>
    </location>
</feature>
<feature type="DNA-binding region">
    <location>
        <begin position="421"/>
        <end position="428"/>
    </location>
</feature>
<feature type="region of interest" description="Disordered" evidence="4">
    <location>
        <begin position="1"/>
        <end position="95"/>
    </location>
</feature>
<feature type="region of interest" description="Calcineurin-binding" evidence="10">
    <location>
        <begin position="111"/>
        <end position="116"/>
    </location>
</feature>
<feature type="region of interest" description="Transactivation domain A (TAD-A)">
    <location>
        <begin position="119"/>
        <end position="199"/>
    </location>
</feature>
<feature type="region of interest" description="Required for cytoplasmic retention of the phosphorylated form" evidence="1">
    <location>
        <begin position="161"/>
        <end position="175"/>
    </location>
</feature>
<feature type="region of interest" description="3 X approximate SP repeats">
    <location>
        <begin position="184"/>
        <end position="286"/>
    </location>
</feature>
<feature type="region of interest" description="Disordered" evidence="4">
    <location>
        <begin position="195"/>
        <end position="297"/>
    </location>
</feature>
<feature type="region of interest" description="Disordered" evidence="4">
    <location>
        <begin position="839"/>
        <end position="894"/>
    </location>
</feature>
<feature type="short sequence motif" description="9aaTAD">
    <location>
        <begin position="26"/>
        <end position="34"/>
    </location>
</feature>
<feature type="short sequence motif" description="Nuclear localization signal">
    <location>
        <begin position="251"/>
        <end position="253"/>
    </location>
</feature>
<feature type="short sequence motif" description="Nuclear localization signal">
    <location>
        <begin position="664"/>
        <end position="666"/>
    </location>
</feature>
<feature type="short sequence motif" description="Nuclear export signal">
    <location>
        <begin position="904"/>
        <end position="913"/>
    </location>
</feature>
<feature type="compositionally biased region" description="Polar residues" evidence="4">
    <location>
        <begin position="214"/>
        <end position="224"/>
    </location>
</feature>
<feature type="compositionally biased region" description="Low complexity" evidence="4">
    <location>
        <begin position="264"/>
        <end position="281"/>
    </location>
</feature>
<feature type="compositionally biased region" description="Polar residues" evidence="4">
    <location>
        <begin position="862"/>
        <end position="874"/>
    </location>
</feature>
<feature type="modified residue" description="Phosphoserine" evidence="23">
    <location>
        <position position="23"/>
    </location>
</feature>
<feature type="modified residue" description="Phosphoserine" evidence="2">
    <location>
        <position position="99"/>
    </location>
</feature>
<feature type="modified residue" description="Phosphoserine" evidence="22">
    <location>
        <position position="107"/>
    </location>
</feature>
<feature type="modified residue" description="Phosphoserine" evidence="22">
    <location>
        <position position="110"/>
    </location>
</feature>
<feature type="modified residue" description="Phosphoserine" evidence="20 23">
    <location>
        <position position="148"/>
    </location>
</feature>
<feature type="modified residue" description="Phosphoserine" evidence="2">
    <location>
        <position position="168"/>
    </location>
</feature>
<feature type="modified residue" description="Phosphoserine" evidence="2">
    <location>
        <position position="171"/>
    </location>
</feature>
<feature type="modified residue" description="Phosphoserine" evidence="2">
    <location>
        <position position="172"/>
    </location>
</feature>
<feature type="modified residue" description="Phosphoserine" evidence="2">
    <location>
        <position position="174"/>
    </location>
</feature>
<feature type="modified residue" description="Phosphoserine" evidence="2">
    <location>
        <position position="175"/>
    </location>
</feature>
<feature type="modified residue" description="Phosphoserine" evidence="2">
    <location>
        <position position="177"/>
    </location>
</feature>
<feature type="modified residue" description="Phosphoserine" evidence="2">
    <location>
        <position position="180"/>
    </location>
</feature>
<feature type="modified residue" description="Phosphoserine" evidence="2">
    <location>
        <position position="213"/>
    </location>
</feature>
<feature type="modified residue" description="Phosphoserine" evidence="2">
    <location>
        <position position="217"/>
    </location>
</feature>
<feature type="modified residue" description="Phosphoserine" evidence="2">
    <location>
        <position position="221"/>
    </location>
</feature>
<feature type="modified residue" description="Phosphoserine" evidence="2">
    <location>
        <position position="236"/>
    </location>
</feature>
<feature type="modified residue" description="Phosphoserine" evidence="2">
    <location>
        <position position="243"/>
    </location>
</feature>
<feature type="modified residue" description="Phosphoserine" evidence="2">
    <location>
        <position position="255"/>
    </location>
</feature>
<feature type="modified residue" description="Phosphoserine" evidence="2">
    <location>
        <position position="268"/>
    </location>
</feature>
<feature type="modified residue" description="Phosphoserine" evidence="2">
    <location>
        <position position="274"/>
    </location>
</feature>
<feature type="modified residue" description="Phosphoserine" evidence="2">
    <location>
        <position position="276"/>
    </location>
</feature>
<feature type="modified residue" description="Phosphoserine" evidence="2">
    <location>
        <position position="280"/>
    </location>
</feature>
<feature type="modified residue" description="Phosphoserine" evidence="22">
    <location>
        <position position="326"/>
    </location>
</feature>
<feature type="modified residue" description="Phosphoserine" evidence="19 20">
    <location>
        <position position="330"/>
    </location>
</feature>
<feature type="modified residue" description="Phosphoserine" evidence="2">
    <location>
        <position position="363"/>
    </location>
</feature>
<feature type="modified residue" description="Phosphoserine" evidence="20">
    <location>
        <position position="755"/>
    </location>
</feature>
<feature type="modified residue" description="Phosphoserine" evidence="21">
    <location>
        <position position="757"/>
    </location>
</feature>
<feature type="modified residue" description="Phosphoserine" evidence="20 21">
    <location>
        <position position="759"/>
    </location>
</feature>
<feature type="modified residue" description="Phosphoserine" evidence="22">
    <location>
        <position position="856"/>
    </location>
</feature>
<feature type="modified residue" description="Phosphoserine" evidence="20">
    <location>
        <position position="859"/>
    </location>
</feature>
<feature type="splice variant" id="VSP_055926" description="In isoform 5." evidence="15">
    <location>
        <begin position="1"/>
        <end position="219"/>
    </location>
</feature>
<feature type="splice variant" id="VSP_042757" description="In isoform 3 and isoform 4." evidence="15 16">
    <original>MNAPERQPQPDGGDAPGHEPGGSPQDELDFSILFDYEYLNPNE</original>
    <variation>MQREAAFRLGHCHPLRIMGSVDQ</variation>
    <location>
        <begin position="1"/>
        <end position="43"/>
    </location>
</feature>
<feature type="splice variant" id="VSP_005595" description="In isoform 2, isoform 3 and isoform 5." evidence="14 15 16">
    <original>VNEIIRKEFSGPPARNQT</original>
    <variation>ELIDTHLSWIQNIL</variation>
    <location>
        <begin position="908"/>
        <end position="925"/>
    </location>
</feature>
<feature type="sequence variant" id="VAR_051783" description="In dbSNP:rs12479626.">
    <original>H</original>
    <variation>R</variation>
    <location>
        <position position="446"/>
    </location>
</feature>
<feature type="sequence conflict" description="In Ref. 1; AAC50886/AAC50887." evidence="17" ref="1">
    <original>L</original>
    <variation>M</variation>
    <location>
        <position position="65"/>
    </location>
</feature>
<feature type="helix" evidence="29">
    <location>
        <begin position="391"/>
        <end position="393"/>
    </location>
</feature>
<feature type="strand" evidence="25">
    <location>
        <begin position="397"/>
        <end position="399"/>
    </location>
</feature>
<feature type="strand" evidence="26">
    <location>
        <begin position="402"/>
        <end position="405"/>
    </location>
</feature>
<feature type="strand" evidence="26">
    <location>
        <begin position="408"/>
        <end position="414"/>
    </location>
</feature>
<feature type="strand" evidence="27">
    <location>
        <begin position="436"/>
        <end position="439"/>
    </location>
</feature>
<feature type="strand" evidence="26">
    <location>
        <begin position="442"/>
        <end position="445"/>
    </location>
</feature>
<feature type="strand" evidence="27">
    <location>
        <begin position="450"/>
        <end position="452"/>
    </location>
</feature>
<feature type="strand" evidence="26">
    <location>
        <begin position="454"/>
        <end position="461"/>
    </location>
</feature>
<feature type="strand" evidence="26">
    <location>
        <begin position="464"/>
        <end position="466"/>
    </location>
</feature>
<feature type="strand" evidence="26">
    <location>
        <begin position="474"/>
        <end position="478"/>
    </location>
</feature>
<feature type="strand" evidence="29">
    <location>
        <begin position="481"/>
        <end position="483"/>
    </location>
</feature>
<feature type="strand" evidence="24">
    <location>
        <begin position="490"/>
        <end position="492"/>
    </location>
</feature>
<feature type="strand" evidence="26">
    <location>
        <begin position="494"/>
        <end position="496"/>
    </location>
</feature>
<feature type="strand" evidence="26">
    <location>
        <begin position="498"/>
        <end position="503"/>
    </location>
</feature>
<feature type="helix" evidence="26">
    <location>
        <begin position="505"/>
        <end position="507"/>
    </location>
</feature>
<feature type="strand" evidence="26">
    <location>
        <begin position="510"/>
        <end position="512"/>
    </location>
</feature>
<feature type="strand" evidence="26">
    <location>
        <begin position="515"/>
        <end position="520"/>
    </location>
</feature>
<feature type="helix" evidence="26">
    <location>
        <begin position="523"/>
        <end position="526"/>
    </location>
</feature>
<feature type="strand" evidence="26">
    <location>
        <begin position="529"/>
        <end position="531"/>
    </location>
</feature>
<feature type="strand" evidence="26">
    <location>
        <begin position="541"/>
        <end position="552"/>
    </location>
</feature>
<feature type="turn" evidence="26">
    <location>
        <begin position="553"/>
        <end position="555"/>
    </location>
</feature>
<feature type="strand" evidence="26">
    <location>
        <begin position="556"/>
        <end position="563"/>
    </location>
</feature>
<feature type="helix" evidence="24">
    <location>
        <begin position="571"/>
        <end position="576"/>
    </location>
</feature>
<feature type="strand" evidence="30">
    <location>
        <begin position="579"/>
        <end position="584"/>
    </location>
</feature>
<feature type="strand" evidence="30">
    <location>
        <begin position="587"/>
        <end position="589"/>
    </location>
</feature>
<feature type="strand" evidence="30">
    <location>
        <begin position="595"/>
        <end position="601"/>
    </location>
</feature>
<feature type="strand" evidence="30">
    <location>
        <begin position="608"/>
        <end position="614"/>
    </location>
</feature>
<feature type="strand" evidence="26">
    <location>
        <begin position="616"/>
        <end position="618"/>
    </location>
</feature>
<feature type="strand" evidence="30">
    <location>
        <begin position="620"/>
        <end position="626"/>
    </location>
</feature>
<feature type="turn" evidence="30">
    <location>
        <begin position="630"/>
        <end position="632"/>
    </location>
</feature>
<feature type="strand" evidence="30">
    <location>
        <begin position="637"/>
        <end position="641"/>
    </location>
</feature>
<feature type="strand" evidence="28">
    <location>
        <begin position="646"/>
        <end position="648"/>
    </location>
</feature>
<feature type="strand" evidence="30">
    <location>
        <begin position="654"/>
        <end position="662"/>
    </location>
</feature>
<feature type="turn" evidence="30">
    <location>
        <begin position="663"/>
        <end position="665"/>
    </location>
</feature>
<feature type="strand" evidence="30">
    <location>
        <begin position="671"/>
        <end position="676"/>
    </location>
</feature>
<reference key="1">
    <citation type="journal article" date="1996" name="Mol. Cell. Biol.">
        <title>Recombinant NFAT1 (NFATp) is regulated by calcineurin in T cells and mediates transcription of several cytokine genes.</title>
        <authorList>
            <person name="Luo C."/>
            <person name="Burgeon E."/>
            <person name="Carew J.A."/>
            <person name="McCaffrey P.G."/>
            <person name="Badalian T.M."/>
            <person name="Lane W.S."/>
            <person name="Hogan P.G."/>
            <person name="Rao A."/>
        </authorList>
    </citation>
    <scope>NUCLEOTIDE SEQUENCE [MRNA] (ISOFORMS 1 AND 3)</scope>
    <scope>ALTERNATIVE SPLICING</scope>
    <scope>TISSUE SPECIFICITY</scope>
</reference>
<reference key="2">
    <citation type="journal article" date="2008" name="Genomics">
        <title>Alternative splicing and expression of human and mouse NFAT genes.</title>
        <authorList>
            <person name="Vihma H."/>
            <person name="Pruunsild P."/>
            <person name="Timmusk T."/>
        </authorList>
    </citation>
    <scope>NUCLEOTIDE SEQUENCE [MRNA] (ISOFORMS 1; 2; 3; 4 AND 5)</scope>
    <scope>ALTERNATIVE SPLICING</scope>
</reference>
<reference key="3">
    <citation type="journal article" date="2001" name="Nature">
        <title>The DNA sequence and comparative analysis of human chromosome 20.</title>
        <authorList>
            <person name="Deloukas P."/>
            <person name="Matthews L.H."/>
            <person name="Ashurst J.L."/>
            <person name="Burton J."/>
            <person name="Gilbert J.G.R."/>
            <person name="Jones M."/>
            <person name="Stavrides G."/>
            <person name="Almeida J.P."/>
            <person name="Babbage A.K."/>
            <person name="Bagguley C.L."/>
            <person name="Bailey J."/>
            <person name="Barlow K.F."/>
            <person name="Bates K.N."/>
            <person name="Beard L.M."/>
            <person name="Beare D.M."/>
            <person name="Beasley O.P."/>
            <person name="Bird C.P."/>
            <person name="Blakey S.E."/>
            <person name="Bridgeman A.M."/>
            <person name="Brown A.J."/>
            <person name="Buck D."/>
            <person name="Burrill W.D."/>
            <person name="Butler A.P."/>
            <person name="Carder C."/>
            <person name="Carter N.P."/>
            <person name="Chapman J.C."/>
            <person name="Clamp M."/>
            <person name="Clark G."/>
            <person name="Clark L.N."/>
            <person name="Clark S.Y."/>
            <person name="Clee C.M."/>
            <person name="Clegg S."/>
            <person name="Cobley V.E."/>
            <person name="Collier R.E."/>
            <person name="Connor R.E."/>
            <person name="Corby N.R."/>
            <person name="Coulson A."/>
            <person name="Coville G.J."/>
            <person name="Deadman R."/>
            <person name="Dhami P.D."/>
            <person name="Dunn M."/>
            <person name="Ellington A.G."/>
            <person name="Frankland J.A."/>
            <person name="Fraser A."/>
            <person name="French L."/>
            <person name="Garner P."/>
            <person name="Grafham D.V."/>
            <person name="Griffiths C."/>
            <person name="Griffiths M.N.D."/>
            <person name="Gwilliam R."/>
            <person name="Hall R.E."/>
            <person name="Hammond S."/>
            <person name="Harley J.L."/>
            <person name="Heath P.D."/>
            <person name="Ho S."/>
            <person name="Holden J.L."/>
            <person name="Howden P.J."/>
            <person name="Huckle E."/>
            <person name="Hunt A.R."/>
            <person name="Hunt S.E."/>
            <person name="Jekosch K."/>
            <person name="Johnson C.M."/>
            <person name="Johnson D."/>
            <person name="Kay M.P."/>
            <person name="Kimberley A.M."/>
            <person name="King A."/>
            <person name="Knights A."/>
            <person name="Laird G.K."/>
            <person name="Lawlor S."/>
            <person name="Lehvaeslaiho M.H."/>
            <person name="Leversha M.A."/>
            <person name="Lloyd C."/>
            <person name="Lloyd D.M."/>
            <person name="Lovell J.D."/>
            <person name="Marsh V.L."/>
            <person name="Martin S.L."/>
            <person name="McConnachie L.J."/>
            <person name="McLay K."/>
            <person name="McMurray A.A."/>
            <person name="Milne S.A."/>
            <person name="Mistry D."/>
            <person name="Moore M.J.F."/>
            <person name="Mullikin J.C."/>
            <person name="Nickerson T."/>
            <person name="Oliver K."/>
            <person name="Parker A."/>
            <person name="Patel R."/>
            <person name="Pearce T.A.V."/>
            <person name="Peck A.I."/>
            <person name="Phillimore B.J.C.T."/>
            <person name="Prathalingam S.R."/>
            <person name="Plumb R.W."/>
            <person name="Ramsay H."/>
            <person name="Rice C.M."/>
            <person name="Ross M.T."/>
            <person name="Scott C.E."/>
            <person name="Sehra H.K."/>
            <person name="Shownkeen R."/>
            <person name="Sims S."/>
            <person name="Skuce C.D."/>
            <person name="Smith M.L."/>
            <person name="Soderlund C."/>
            <person name="Steward C.A."/>
            <person name="Sulston J.E."/>
            <person name="Swann R.M."/>
            <person name="Sycamore N."/>
            <person name="Taylor R."/>
            <person name="Tee L."/>
            <person name="Thomas D.W."/>
            <person name="Thorpe A."/>
            <person name="Tracey A."/>
            <person name="Tromans A.C."/>
            <person name="Vaudin M."/>
            <person name="Wall M."/>
            <person name="Wallis J.M."/>
            <person name="Whitehead S.L."/>
            <person name="Whittaker P."/>
            <person name="Willey D.L."/>
            <person name="Williams L."/>
            <person name="Williams S.A."/>
            <person name="Wilming L."/>
            <person name="Wray P.W."/>
            <person name="Hubbard T."/>
            <person name="Durbin R.M."/>
            <person name="Bentley D.R."/>
            <person name="Beck S."/>
            <person name="Rogers J."/>
        </authorList>
    </citation>
    <scope>NUCLEOTIDE SEQUENCE [LARGE SCALE GENOMIC DNA]</scope>
</reference>
<reference key="4">
    <citation type="submission" date="2005-09" db="EMBL/GenBank/DDBJ databases">
        <authorList>
            <person name="Mural R.J."/>
            <person name="Istrail S."/>
            <person name="Sutton G."/>
            <person name="Florea L."/>
            <person name="Halpern A.L."/>
            <person name="Mobarry C.M."/>
            <person name="Lippert R."/>
            <person name="Walenz B."/>
            <person name="Shatkay H."/>
            <person name="Dew I."/>
            <person name="Miller J.R."/>
            <person name="Flanigan M.J."/>
            <person name="Edwards N.J."/>
            <person name="Bolanos R."/>
            <person name="Fasulo D."/>
            <person name="Halldorsson B.V."/>
            <person name="Hannenhalli S."/>
            <person name="Turner R."/>
            <person name="Yooseph S."/>
            <person name="Lu F."/>
            <person name="Nusskern D.R."/>
            <person name="Shue B.C."/>
            <person name="Zheng X.H."/>
            <person name="Zhong F."/>
            <person name="Delcher A.L."/>
            <person name="Huson D.H."/>
            <person name="Kravitz S.A."/>
            <person name="Mouchard L."/>
            <person name="Reinert K."/>
            <person name="Remington K.A."/>
            <person name="Clark A.G."/>
            <person name="Waterman M.S."/>
            <person name="Eichler E.E."/>
            <person name="Adams M.D."/>
            <person name="Hunkapiller M.W."/>
            <person name="Myers E.W."/>
            <person name="Venter J.C."/>
        </authorList>
    </citation>
    <scope>NUCLEOTIDE SEQUENCE [LARGE SCALE GENOMIC DNA]</scope>
</reference>
<reference key="5">
    <citation type="journal article" date="2004" name="Genome Res.">
        <title>The status, quality, and expansion of the NIH full-length cDNA project: the Mammalian Gene Collection (MGC).</title>
        <authorList>
            <consortium name="The MGC Project Team"/>
        </authorList>
    </citation>
    <scope>NUCLEOTIDE SEQUENCE [LARGE SCALE MRNA] (ISOFORMS 1 AND 2)</scope>
</reference>
<reference key="6">
    <citation type="journal article" date="1999" name="Cell">
        <title>Generic signals and specific outcomes: signaling through Ca2+, calcineurin, and NF-AT.</title>
        <authorList>
            <person name="Crabtree G.R."/>
        </authorList>
    </citation>
    <scope>REVIEW</scope>
</reference>
<reference key="7">
    <citation type="journal article" date="2004" name="Anal. Chem.">
        <title>Robust phosphoproteomic profiling of tyrosine phosphorylation sites from human T cells using immobilized metal affinity chromatography and tandem mass spectrometry.</title>
        <authorList>
            <person name="Brill L.M."/>
            <person name="Salomon A.R."/>
            <person name="Ficarro S.B."/>
            <person name="Mukherji M."/>
            <person name="Stettler-Gill M."/>
            <person name="Peters E.C."/>
        </authorList>
    </citation>
    <scope>PHOSPHORYLATION [LARGE SCALE ANALYSIS] AT SER-330</scope>
    <scope>IDENTIFICATION BY MASS SPECTROMETRY [LARGE SCALE ANALYSIS]</scope>
    <source>
        <tissue>Leukemic T-cell</tissue>
    </source>
</reference>
<reference key="8">
    <citation type="journal article" date="2005" name="Proc. Natl. Acad. Sci. U.S.A.">
        <title>Foxp3 interacts with nuclear factor of activated T cells and NF-kappa B to repress cytokine gene expression and effector functions of T helper cells.</title>
        <authorList>
            <person name="Bettelli E."/>
            <person name="Dastrange M."/>
            <person name="Oukka M."/>
        </authorList>
    </citation>
    <scope>FUNCTION</scope>
    <scope>INTERACTION WITH FOXP3</scope>
</reference>
<reference key="9">
    <citation type="journal article" date="2007" name="Genomics">
        <title>Nine-amino-acid transactivation domain: establishment and prediction utilities.</title>
        <authorList>
            <person name="Piskacek S."/>
            <person name="Gregor M."/>
            <person name="Nemethova M."/>
            <person name="Grabner M."/>
            <person name="Kovarik P."/>
            <person name="Piskacek M."/>
        </authorList>
    </citation>
    <scope>DOMAIN</scope>
</reference>
<reference key="10">
    <citation type="journal article" date="2008" name="Science">
        <title>NFAT binding and regulation of T cell activation by the cytoplasmic scaffolding Homer proteins.</title>
        <authorList>
            <person name="Huang G.N."/>
            <person name="Huso D.L."/>
            <person name="Bouyain S."/>
            <person name="Tu J."/>
            <person name="McCorkell K.A."/>
            <person name="May M.J."/>
            <person name="Zhu Y."/>
            <person name="Lutz M."/>
            <person name="Collins S."/>
            <person name="Dehoff M."/>
            <person name="Kang S."/>
            <person name="Whartenby K."/>
            <person name="Powell J."/>
            <person name="Leahy D."/>
            <person name="Worley P.F."/>
        </authorList>
    </citation>
    <scope>INTERACTION WITH HOMER2 AND HOMER3</scope>
</reference>
<reference key="11">
    <citation type="journal article" date="2009" name="Sci. Signal.">
        <title>Quantitative phosphoproteomic analysis of T cell receptor signaling reveals system-wide modulation of protein-protein interactions.</title>
        <authorList>
            <person name="Mayya V."/>
            <person name="Lundgren D.H."/>
            <person name="Hwang S.-I."/>
            <person name="Rezaul K."/>
            <person name="Wu L."/>
            <person name="Eng J.K."/>
            <person name="Rodionov V."/>
            <person name="Han D.K."/>
        </authorList>
    </citation>
    <scope>PHOSPHORYLATION [LARGE SCALE ANALYSIS] AT SER-148; SER-330; SER-755; SER-759 AND SER-859</scope>
    <scope>IDENTIFICATION BY MASS SPECTROMETRY [LARGE SCALE ANALYSIS]</scope>
    <source>
        <tissue>Leukemic T-cell</tissue>
    </source>
</reference>
<reference key="12">
    <citation type="journal article" date="2010" name="Sci. Signal.">
        <title>Quantitative phosphoproteomics reveals widespread full phosphorylation site occupancy during mitosis.</title>
        <authorList>
            <person name="Olsen J.V."/>
            <person name="Vermeulen M."/>
            <person name="Santamaria A."/>
            <person name="Kumar C."/>
            <person name="Miller M.L."/>
            <person name="Jensen L.J."/>
            <person name="Gnad F."/>
            <person name="Cox J."/>
            <person name="Jensen T.S."/>
            <person name="Nigg E.A."/>
            <person name="Brunak S."/>
            <person name="Mann M."/>
        </authorList>
    </citation>
    <scope>PHOSPHORYLATION [LARGE SCALE ANALYSIS] AT SER-757 AND SER-759</scope>
    <scope>IDENTIFICATION BY MASS SPECTROMETRY [LARGE SCALE ANALYSIS]</scope>
    <source>
        <tissue>Cervix carcinoma</tissue>
    </source>
</reference>
<reference key="13">
    <citation type="journal article" date="2011" name="Biochem. J.">
        <title>NFAT promotes carcinoma invasive migration through glypican-6.</title>
        <authorList>
            <person name="Yiu G.K."/>
            <person name="Kaunisto A."/>
            <person name="Chin Y.R."/>
            <person name="Toker A."/>
        </authorList>
    </citation>
    <scope>FUNCTION</scope>
</reference>
<reference key="14">
    <citation type="journal article" date="2013" name="J. Proteome Res.">
        <title>Toward a comprehensive characterization of a human cancer cell phosphoproteome.</title>
        <authorList>
            <person name="Zhou H."/>
            <person name="Di Palma S."/>
            <person name="Preisinger C."/>
            <person name="Peng M."/>
            <person name="Polat A.N."/>
            <person name="Heck A.J."/>
            <person name="Mohammed S."/>
        </authorList>
    </citation>
    <scope>PHOSPHORYLATION [LARGE SCALE ANALYSIS] AT SER-107; SER-110; SER-326 AND SER-856</scope>
    <scope>IDENTIFICATION BY MASS SPECTROMETRY [LARGE SCALE ANALYSIS]</scope>
    <source>
        <tissue>Erythroleukemia</tissue>
    </source>
</reference>
<reference key="15">
    <citation type="journal article" date="2014" name="J. Proteomics">
        <title>An enzyme assisted RP-RPLC approach for in-depth analysis of human liver phosphoproteome.</title>
        <authorList>
            <person name="Bian Y."/>
            <person name="Song C."/>
            <person name="Cheng K."/>
            <person name="Dong M."/>
            <person name="Wang F."/>
            <person name="Huang J."/>
            <person name="Sun D."/>
            <person name="Wang L."/>
            <person name="Ye M."/>
            <person name="Zou H."/>
        </authorList>
    </citation>
    <scope>PHOSPHORYLATION [LARGE SCALE ANALYSIS] AT SER-23 AND SER-148</scope>
    <scope>IDENTIFICATION BY MASS SPECTROMETRY [LARGE SCALE ANALYSIS]</scope>
    <source>
        <tissue>Liver</tissue>
    </source>
</reference>
<reference key="16">
    <citation type="journal article" date="2015" name="PLoS ONE">
        <title>Calcineurin Undergoes a Conformational Switch Evoked via Peptidyl-Prolyl Isomerization.</title>
        <authorList>
            <person name="Guasch A."/>
            <person name="Aranguren-Ibanez A."/>
            <person name="Perez-Luque R."/>
            <person name="Aparicio D."/>
            <person name="Martinez-Hoyer S."/>
            <person name="Mulero M.C."/>
            <person name="Serrano-Candelas E."/>
            <person name="Perez-Riba M."/>
            <person name="Fita I."/>
        </authorList>
    </citation>
    <scope>INTERACTION WITH PPP3CA</scope>
</reference>
<reference key="17">
    <citation type="journal article" date="2016" name="Dev. Cell">
        <title>Endothelial RSPO3 controls vascular stability and pruning through non-canonical WNT/Ca(2+)/NFAT signaling.</title>
        <authorList>
            <person name="Scholz B."/>
            <person name="Korn C."/>
            <person name="Wojtarowicz J."/>
            <person name="Mogler C."/>
            <person name="Augustin I."/>
            <person name="Boutros M."/>
            <person name="Niehrs C."/>
            <person name="Augustin H.G."/>
        </authorList>
    </citation>
    <scope>UBIQUITINATION</scope>
</reference>
<reference key="18">
    <citation type="journal article" date="2022" name="Blood">
        <title>Human complete NFAT1 deficiency causes a triad of joint contractures, osteochondromas, and B-cell malignancy.</title>
        <authorList>
            <person name="Sharma M."/>
            <person name="Fu M.P."/>
            <person name="Lu H.Y."/>
            <person name="Sharma A.A."/>
            <person name="Modi B.P."/>
            <person name="Michalski C."/>
            <person name="Lin S."/>
            <person name="Dalmann J."/>
            <person name="Salman A."/>
            <person name="Del Bel K.L."/>
            <person name="Waqas M."/>
            <person name="Terry J."/>
            <person name="Setiadi A."/>
            <person name="Lavoie P.M."/>
            <person name="Wasserman W.W."/>
            <person name="Mwenifumbo J."/>
            <person name="Kobor M.S."/>
            <person name="Lee A.F."/>
            <person name="Kuchenbauer F."/>
            <person name="Lehman A."/>
            <person name="Cheng S."/>
            <person name="Cooper A."/>
            <person name="Patel M.S."/>
            <person name="Turvey S.E."/>
        </authorList>
    </citation>
    <scope>INVOLVEMENT IN JCOSL</scope>
    <scope>FUNCTION</scope>
</reference>
<reference evidence="18" key="19">
    <citation type="journal article" date="2011" name="Immunity">
        <title>Structure of a domain-swapped FOXP3 dimer on DNA and its function in regulatory T cells.</title>
        <authorList>
            <person name="Bandukwala H.S."/>
            <person name="Wu Y."/>
            <person name="Feuerer M."/>
            <person name="Chen Y."/>
            <person name="Barboza B."/>
            <person name="Ghosh S."/>
            <person name="Stroud J.C."/>
            <person name="Benoist C."/>
            <person name="Mathis D."/>
            <person name="Rao A."/>
            <person name="Chen L."/>
        </authorList>
    </citation>
    <scope>X-RAY CRYSTALLOGRAPHY (2.80 ANGSTROMS) OF 396-678 IN COMPLEX WITH DNA AND FOXP3</scope>
    <scope>INTERACTION WITH FOXP3</scope>
</reference>
<dbReference type="EMBL" id="U43341">
    <property type="protein sequence ID" value="AAC50886.1"/>
    <property type="molecule type" value="mRNA"/>
</dbReference>
<dbReference type="EMBL" id="U43342">
    <property type="protein sequence ID" value="AAC50887.1"/>
    <property type="molecule type" value="mRNA"/>
</dbReference>
<dbReference type="EMBL" id="EU887573">
    <property type="protein sequence ID" value="ACG55593.1"/>
    <property type="molecule type" value="mRNA"/>
</dbReference>
<dbReference type="EMBL" id="EU887574">
    <property type="protein sequence ID" value="ACG55594.1"/>
    <property type="molecule type" value="mRNA"/>
</dbReference>
<dbReference type="EMBL" id="EU887575">
    <property type="protein sequence ID" value="ACG55595.1"/>
    <property type="molecule type" value="mRNA"/>
</dbReference>
<dbReference type="EMBL" id="EU887576">
    <property type="protein sequence ID" value="ACG55596.1"/>
    <property type="molecule type" value="mRNA"/>
</dbReference>
<dbReference type="EMBL" id="EU887577">
    <property type="protein sequence ID" value="ACG55597.1"/>
    <property type="molecule type" value="mRNA"/>
</dbReference>
<dbReference type="EMBL" id="EU887578">
    <property type="protein sequence ID" value="ACG55598.1"/>
    <property type="molecule type" value="mRNA"/>
</dbReference>
<dbReference type="EMBL" id="AL132866">
    <property type="status" value="NOT_ANNOTATED_CDS"/>
    <property type="molecule type" value="Genomic_DNA"/>
</dbReference>
<dbReference type="EMBL" id="AL035682">
    <property type="status" value="NOT_ANNOTATED_CDS"/>
    <property type="molecule type" value="Genomic_DNA"/>
</dbReference>
<dbReference type="EMBL" id="AL035684">
    <property type="status" value="NOT_ANNOTATED_CDS"/>
    <property type="molecule type" value="Genomic_DNA"/>
</dbReference>
<dbReference type="EMBL" id="CH471077">
    <property type="protein sequence ID" value="EAW75602.1"/>
    <property type="molecule type" value="Genomic_DNA"/>
</dbReference>
<dbReference type="EMBL" id="CH471077">
    <property type="protein sequence ID" value="EAW75603.1"/>
    <property type="molecule type" value="Genomic_DNA"/>
</dbReference>
<dbReference type="EMBL" id="BC136418">
    <property type="protein sequence ID" value="AAI36419.1"/>
    <property type="molecule type" value="mRNA"/>
</dbReference>
<dbReference type="EMBL" id="BC144074">
    <property type="protein sequence ID" value="AAI44075.1"/>
    <property type="molecule type" value="mRNA"/>
</dbReference>
<dbReference type="CCDS" id="CCDS13437.1">
    <molecule id="Q13469-1"/>
</dbReference>
<dbReference type="CCDS" id="CCDS33488.1">
    <molecule id="Q13469-2"/>
</dbReference>
<dbReference type="CCDS" id="CCDS46614.1">
    <molecule id="Q13469-3"/>
</dbReference>
<dbReference type="CCDS" id="CCDS68156.1">
    <molecule id="Q13469-5"/>
</dbReference>
<dbReference type="CCDS" id="CCDS68157.1">
    <molecule id="Q13469-4"/>
</dbReference>
<dbReference type="PIR" id="G02326">
    <property type="entry name" value="G02326"/>
</dbReference>
<dbReference type="RefSeq" id="NP_001129493.1">
    <molecule id="Q13469-3"/>
    <property type="nucleotide sequence ID" value="NM_001136021.3"/>
</dbReference>
<dbReference type="RefSeq" id="NP_001245221.1">
    <molecule id="Q13469-4"/>
    <property type="nucleotide sequence ID" value="NM_001258292.2"/>
</dbReference>
<dbReference type="RefSeq" id="NP_001245223.1">
    <molecule id="Q13469-5"/>
    <property type="nucleotide sequence ID" value="NM_001258294.2"/>
</dbReference>
<dbReference type="RefSeq" id="NP_001245225.1">
    <molecule id="Q13469-5"/>
    <property type="nucleotide sequence ID" value="NM_001258296.2"/>
</dbReference>
<dbReference type="RefSeq" id="NP_036472.2">
    <molecule id="Q13469-2"/>
    <property type="nucleotide sequence ID" value="NM_012340.4"/>
</dbReference>
<dbReference type="RefSeq" id="NP_775114.1">
    <molecule id="Q13469-1"/>
    <property type="nucleotide sequence ID" value="NM_173091.4"/>
</dbReference>
<dbReference type="PDB" id="1A02">
    <property type="method" value="X-ray"/>
    <property type="resolution" value="2.70 A"/>
    <property type="chains" value="N=392-678"/>
</dbReference>
<dbReference type="PDB" id="1OWR">
    <property type="method" value="X-ray"/>
    <property type="resolution" value="3.00 A"/>
    <property type="chains" value="M/N/P/Q=396-678"/>
</dbReference>
<dbReference type="PDB" id="1P7H">
    <property type="method" value="X-ray"/>
    <property type="resolution" value="2.60 A"/>
    <property type="chains" value="L/M/N/O=393-678"/>
</dbReference>
<dbReference type="PDB" id="1PZU">
    <property type="method" value="X-ray"/>
    <property type="resolution" value="3.10 A"/>
    <property type="chains" value="B/D/H/I/L/M=396-678"/>
</dbReference>
<dbReference type="PDB" id="1S9K">
    <property type="method" value="X-ray"/>
    <property type="resolution" value="3.10 A"/>
    <property type="chains" value="C=399-678"/>
</dbReference>
<dbReference type="PDB" id="2AS5">
    <property type="method" value="X-ray"/>
    <property type="resolution" value="2.70 A"/>
    <property type="chains" value="M/N=392-678"/>
</dbReference>
<dbReference type="PDB" id="2O93">
    <property type="method" value="X-ray"/>
    <property type="resolution" value="3.05 A"/>
    <property type="chains" value="L/M/O=396-678"/>
</dbReference>
<dbReference type="PDB" id="3QRF">
    <property type="method" value="X-ray"/>
    <property type="resolution" value="2.80 A"/>
    <property type="chains" value="M/N=396-678"/>
</dbReference>
<dbReference type="PDB" id="8OW4">
    <property type="method" value="X-ray"/>
    <property type="resolution" value="2.75 A"/>
    <property type="chains" value="A/B=391-678"/>
</dbReference>
<dbReference type="PDB" id="8R07">
    <property type="method" value="X-ray"/>
    <property type="resolution" value="1.74 A"/>
    <property type="chains" value="A/B=575-678"/>
</dbReference>
<dbReference type="PDB" id="8R3F">
    <property type="method" value="X-ray"/>
    <property type="resolution" value="1.55 A"/>
    <property type="chains" value="A/B=575-678"/>
</dbReference>
<dbReference type="PDBsum" id="1A02"/>
<dbReference type="PDBsum" id="1OWR"/>
<dbReference type="PDBsum" id="1P7H"/>
<dbReference type="PDBsum" id="1PZU"/>
<dbReference type="PDBsum" id="1S9K"/>
<dbReference type="PDBsum" id="2AS5"/>
<dbReference type="PDBsum" id="2O93"/>
<dbReference type="PDBsum" id="3QRF"/>
<dbReference type="PDBsum" id="8OW4"/>
<dbReference type="PDBsum" id="8R07"/>
<dbReference type="PDBsum" id="8R3F"/>
<dbReference type="SMR" id="Q13469"/>
<dbReference type="BioGRID" id="110846">
    <property type="interactions" value="195"/>
</dbReference>
<dbReference type="ComplexPortal" id="CPX-480">
    <property type="entry name" value="AP-1 transcription factor complex FOS-JUN-NFATC2"/>
</dbReference>
<dbReference type="CORUM" id="Q13469"/>
<dbReference type="DIP" id="DIP-27630N"/>
<dbReference type="ELM" id="Q13469"/>
<dbReference type="FunCoup" id="Q13469">
    <property type="interactions" value="1499"/>
</dbReference>
<dbReference type="IntAct" id="Q13469">
    <property type="interactions" value="22"/>
</dbReference>
<dbReference type="MINT" id="Q13469"/>
<dbReference type="STRING" id="9606.ENSP00000379330"/>
<dbReference type="BindingDB" id="Q13469"/>
<dbReference type="GlyCosmos" id="Q13469">
    <property type="glycosylation" value="7 sites, 2 glycans"/>
</dbReference>
<dbReference type="GlyGen" id="Q13469">
    <property type="glycosylation" value="7 sites, 2 O-linked glycans (7 sites)"/>
</dbReference>
<dbReference type="iPTMnet" id="Q13469"/>
<dbReference type="PhosphoSitePlus" id="Q13469"/>
<dbReference type="BioMuta" id="NFATC2"/>
<dbReference type="DMDM" id="68846905"/>
<dbReference type="jPOST" id="Q13469"/>
<dbReference type="MassIVE" id="Q13469"/>
<dbReference type="PaxDb" id="9606-ENSP00000379330"/>
<dbReference type="PeptideAtlas" id="Q13469"/>
<dbReference type="ProteomicsDB" id="59464">
    <molecule id="Q13469-1"/>
</dbReference>
<dbReference type="ProteomicsDB" id="59465">
    <molecule id="Q13469-2"/>
</dbReference>
<dbReference type="ProteomicsDB" id="59466">
    <molecule id="Q13469-3"/>
</dbReference>
<dbReference type="Pumba" id="Q13469"/>
<dbReference type="Antibodypedia" id="1758">
    <property type="antibodies" value="531 antibodies from 45 providers"/>
</dbReference>
<dbReference type="DNASU" id="4773"/>
<dbReference type="Ensembl" id="ENST00000371564.8">
    <molecule id="Q13469-2"/>
    <property type="protein sequence ID" value="ENSP00000360619.3"/>
    <property type="gene ID" value="ENSG00000101096.20"/>
</dbReference>
<dbReference type="Ensembl" id="ENST00000396009.7">
    <molecule id="Q13469-1"/>
    <property type="protein sequence ID" value="ENSP00000379330.3"/>
    <property type="gene ID" value="ENSG00000101096.20"/>
</dbReference>
<dbReference type="Ensembl" id="ENST00000414705.5">
    <molecule id="Q13469-3"/>
    <property type="protein sequence ID" value="ENSP00000396471.1"/>
    <property type="gene ID" value="ENSG00000101096.20"/>
</dbReference>
<dbReference type="Ensembl" id="ENST00000609507.1">
    <molecule id="Q13469-5"/>
    <property type="protein sequence ID" value="ENSP00000477342.1"/>
    <property type="gene ID" value="ENSG00000101096.20"/>
</dbReference>
<dbReference type="Ensembl" id="ENST00000609943.5">
    <molecule id="Q13469-4"/>
    <property type="protein sequence ID" value="ENSP00000477370.1"/>
    <property type="gene ID" value="ENSG00000101096.20"/>
</dbReference>
<dbReference type="Ensembl" id="ENST00000610033.5">
    <molecule id="Q13469-5"/>
    <property type="protein sequence ID" value="ENSP00000477142.1"/>
    <property type="gene ID" value="ENSG00000101096.20"/>
</dbReference>
<dbReference type="GeneID" id="4773"/>
<dbReference type="KEGG" id="hsa:4773"/>
<dbReference type="MANE-Select" id="ENST00000371564.8">
    <molecule id="Q13469-2"/>
    <property type="protein sequence ID" value="ENSP00000360619.3"/>
    <property type="RefSeq nucleotide sequence ID" value="NM_012340.5"/>
    <property type="RefSeq protein sequence ID" value="NP_036472.2"/>
</dbReference>
<dbReference type="UCSC" id="uc002xwc.4">
    <molecule id="Q13469-1"/>
    <property type="organism name" value="human"/>
</dbReference>
<dbReference type="AGR" id="HGNC:7776"/>
<dbReference type="CTD" id="4773"/>
<dbReference type="DisGeNET" id="4773"/>
<dbReference type="GeneCards" id="NFATC2"/>
<dbReference type="HGNC" id="HGNC:7776">
    <property type="gene designation" value="NFATC2"/>
</dbReference>
<dbReference type="HPA" id="ENSG00000101096">
    <property type="expression patterns" value="Low tissue specificity"/>
</dbReference>
<dbReference type="MalaCards" id="NFATC2"/>
<dbReference type="MIM" id="600490">
    <property type="type" value="gene"/>
</dbReference>
<dbReference type="MIM" id="620232">
    <property type="type" value="phenotype"/>
</dbReference>
<dbReference type="neXtProt" id="NX_Q13469"/>
<dbReference type="OpenTargets" id="ENSG00000101096"/>
<dbReference type="PharmGKB" id="PA31583"/>
<dbReference type="VEuPathDB" id="HostDB:ENSG00000101096"/>
<dbReference type="eggNOG" id="ENOG502QTJI">
    <property type="taxonomic scope" value="Eukaryota"/>
</dbReference>
<dbReference type="GeneTree" id="ENSGT00940000156230"/>
<dbReference type="HOGENOM" id="CLU_010185_1_1_1"/>
<dbReference type="InParanoid" id="Q13469"/>
<dbReference type="OMA" id="PAIPICX"/>
<dbReference type="OrthoDB" id="5346094at2759"/>
<dbReference type="PAN-GO" id="Q13469">
    <property type="GO annotations" value="7 GO annotations based on evolutionary models"/>
</dbReference>
<dbReference type="PhylomeDB" id="Q13469"/>
<dbReference type="TreeFam" id="TF326480"/>
<dbReference type="PathwayCommons" id="Q13469"/>
<dbReference type="Reactome" id="R-HSA-2025928">
    <property type="pathway name" value="Calcineurin activates NFAT"/>
</dbReference>
<dbReference type="Reactome" id="R-HSA-2871809">
    <property type="pathway name" value="FCERI mediated Ca+2 mobilization"/>
</dbReference>
<dbReference type="Reactome" id="R-HSA-5607763">
    <property type="pathway name" value="CLEC7A (Dectin-1) induces NFAT activation"/>
</dbReference>
<dbReference type="Reactome" id="R-HSA-8877330">
    <property type="pathway name" value="RUNX1 and FOXP3 control the development of regulatory T lymphocytes (Tregs)"/>
</dbReference>
<dbReference type="SignaLink" id="Q13469"/>
<dbReference type="SIGNOR" id="Q13469"/>
<dbReference type="BioGRID-ORCS" id="4773">
    <property type="hits" value="20 hits in 1183 CRISPR screens"/>
</dbReference>
<dbReference type="ChiTaRS" id="NFATC2">
    <property type="organism name" value="human"/>
</dbReference>
<dbReference type="EvolutionaryTrace" id="Q13469"/>
<dbReference type="GeneWiki" id="NFATC2"/>
<dbReference type="GenomeRNAi" id="4773"/>
<dbReference type="Pharos" id="Q13469">
    <property type="development level" value="Tbio"/>
</dbReference>
<dbReference type="PRO" id="PR:Q13469"/>
<dbReference type="Proteomes" id="UP000005640">
    <property type="component" value="Chromosome 20"/>
</dbReference>
<dbReference type="RNAct" id="Q13469">
    <property type="molecule type" value="protein"/>
</dbReference>
<dbReference type="Bgee" id="ENSG00000101096">
    <property type="expression patterns" value="Expressed in vena cava and 177 other cell types or tissues"/>
</dbReference>
<dbReference type="GO" id="GO:0000785">
    <property type="term" value="C:chromatin"/>
    <property type="evidence" value="ECO:0000247"/>
    <property type="project" value="NTNU_SB"/>
</dbReference>
<dbReference type="GO" id="GO:0005737">
    <property type="term" value="C:cytoplasm"/>
    <property type="evidence" value="ECO:0000314"/>
    <property type="project" value="UniProtKB"/>
</dbReference>
<dbReference type="GO" id="GO:0005829">
    <property type="term" value="C:cytosol"/>
    <property type="evidence" value="ECO:0000314"/>
    <property type="project" value="HPA"/>
</dbReference>
<dbReference type="GO" id="GO:0005654">
    <property type="term" value="C:nucleoplasm"/>
    <property type="evidence" value="ECO:0000314"/>
    <property type="project" value="HPA"/>
</dbReference>
<dbReference type="GO" id="GO:0005634">
    <property type="term" value="C:nucleus"/>
    <property type="evidence" value="ECO:0000314"/>
    <property type="project" value="UniProtKB"/>
</dbReference>
<dbReference type="GO" id="GO:1990904">
    <property type="term" value="C:ribonucleoprotein complex"/>
    <property type="evidence" value="ECO:0007669"/>
    <property type="project" value="Ensembl"/>
</dbReference>
<dbReference type="GO" id="GO:0035976">
    <property type="term" value="C:transcription factor AP-1 complex"/>
    <property type="evidence" value="ECO:0000353"/>
    <property type="project" value="ComplexPortal"/>
</dbReference>
<dbReference type="GO" id="GO:0005667">
    <property type="term" value="C:transcription regulator complex"/>
    <property type="evidence" value="ECO:0000318"/>
    <property type="project" value="GO_Central"/>
</dbReference>
<dbReference type="GO" id="GO:0071889">
    <property type="term" value="F:14-3-3 protein binding"/>
    <property type="evidence" value="ECO:0000269"/>
    <property type="project" value="DisProt"/>
</dbReference>
<dbReference type="GO" id="GO:0003682">
    <property type="term" value="F:chromatin binding"/>
    <property type="evidence" value="ECO:0007669"/>
    <property type="project" value="Ensembl"/>
</dbReference>
<dbReference type="GO" id="GO:0003677">
    <property type="term" value="F:DNA binding"/>
    <property type="evidence" value="ECO:0000304"/>
    <property type="project" value="UniProtKB"/>
</dbReference>
<dbReference type="GO" id="GO:0001228">
    <property type="term" value="F:DNA-binding transcription activator activity, RNA polymerase II-specific"/>
    <property type="evidence" value="ECO:0007669"/>
    <property type="project" value="Ensembl"/>
</dbReference>
<dbReference type="GO" id="GO:0003700">
    <property type="term" value="F:DNA-binding transcription factor activity"/>
    <property type="evidence" value="ECO:0000304"/>
    <property type="project" value="UniProtKB"/>
</dbReference>
<dbReference type="GO" id="GO:0000981">
    <property type="term" value="F:DNA-binding transcription factor activity, RNA polymerase II-specific"/>
    <property type="evidence" value="ECO:0000247"/>
    <property type="project" value="NTNU_SB"/>
</dbReference>
<dbReference type="GO" id="GO:0001227">
    <property type="term" value="F:DNA-binding transcription repressor activity, RNA polymerase II-specific"/>
    <property type="evidence" value="ECO:0007669"/>
    <property type="project" value="Ensembl"/>
</dbReference>
<dbReference type="GO" id="GO:0060090">
    <property type="term" value="F:molecular adaptor activity"/>
    <property type="evidence" value="ECO:0000269"/>
    <property type="project" value="DisProt"/>
</dbReference>
<dbReference type="GO" id="GO:0019902">
    <property type="term" value="F:phosphatase binding"/>
    <property type="evidence" value="ECO:0000353"/>
    <property type="project" value="UniProtKB"/>
</dbReference>
<dbReference type="GO" id="GO:0000978">
    <property type="term" value="F:RNA polymerase II cis-regulatory region sequence-specific DNA binding"/>
    <property type="evidence" value="ECO:0000318"/>
    <property type="project" value="GO_Central"/>
</dbReference>
<dbReference type="GO" id="GO:1990837">
    <property type="term" value="F:sequence-specific double-stranded DNA binding"/>
    <property type="evidence" value="ECO:0000314"/>
    <property type="project" value="ARUK-UCL"/>
</dbReference>
<dbReference type="GO" id="GO:0050853">
    <property type="term" value="P:B cell receptor signaling pathway"/>
    <property type="evidence" value="ECO:0000315"/>
    <property type="project" value="UniProtKB"/>
</dbReference>
<dbReference type="GO" id="GO:0033173">
    <property type="term" value="P:calcineurin-NFAT signaling cascade"/>
    <property type="evidence" value="ECO:0000318"/>
    <property type="project" value="GO_Central"/>
</dbReference>
<dbReference type="GO" id="GO:0051216">
    <property type="term" value="P:cartilage development"/>
    <property type="evidence" value="ECO:0000315"/>
    <property type="project" value="UniProtKB"/>
</dbReference>
<dbReference type="GO" id="GO:0016477">
    <property type="term" value="P:cell migration"/>
    <property type="evidence" value="ECO:0000314"/>
    <property type="project" value="UniProtKB"/>
</dbReference>
<dbReference type="GO" id="GO:0071277">
    <property type="term" value="P:cellular response to calcium ion"/>
    <property type="evidence" value="ECO:0007669"/>
    <property type="project" value="Ensembl"/>
</dbReference>
<dbReference type="GO" id="GO:0006974">
    <property type="term" value="P:DNA damage response"/>
    <property type="evidence" value="ECO:0000315"/>
    <property type="project" value="UniProtKB"/>
</dbReference>
<dbReference type="GO" id="GO:0140742">
    <property type="term" value="P:lncRNA transcription"/>
    <property type="evidence" value="ECO:0007669"/>
    <property type="project" value="Ensembl"/>
</dbReference>
<dbReference type="GO" id="GO:0014904">
    <property type="term" value="P:myotube cell development"/>
    <property type="evidence" value="ECO:0007669"/>
    <property type="project" value="Ensembl"/>
</dbReference>
<dbReference type="GO" id="GO:1905064">
    <property type="term" value="P:negative regulation of vascular associated smooth muscle cell differentiation"/>
    <property type="evidence" value="ECO:0000314"/>
    <property type="project" value="BHF-UCL"/>
</dbReference>
<dbReference type="GO" id="GO:0030890">
    <property type="term" value="P:positive regulation of B cell proliferation"/>
    <property type="evidence" value="ECO:0000315"/>
    <property type="project" value="UniProtKB"/>
</dbReference>
<dbReference type="GO" id="GO:0045893">
    <property type="term" value="P:positive regulation of DNA-templated transcription"/>
    <property type="evidence" value="ECO:0000314"/>
    <property type="project" value="MGI"/>
</dbReference>
<dbReference type="GO" id="GO:0010628">
    <property type="term" value="P:positive regulation of gene expression"/>
    <property type="evidence" value="ECO:0007669"/>
    <property type="project" value="Ensembl"/>
</dbReference>
<dbReference type="GO" id="GO:1901741">
    <property type="term" value="P:positive regulation of myoblast fusion"/>
    <property type="evidence" value="ECO:0007669"/>
    <property type="project" value="Ensembl"/>
</dbReference>
<dbReference type="GO" id="GO:0045944">
    <property type="term" value="P:positive regulation of transcription by RNA polymerase II"/>
    <property type="evidence" value="ECO:0000318"/>
    <property type="project" value="GO_Central"/>
</dbReference>
<dbReference type="GO" id="GO:0006355">
    <property type="term" value="P:regulation of DNA-templated transcription"/>
    <property type="evidence" value="ECO:0000304"/>
    <property type="project" value="UniProtKB"/>
</dbReference>
<dbReference type="GO" id="GO:0006357">
    <property type="term" value="P:regulation of transcription by RNA polymerase II"/>
    <property type="evidence" value="ECO:0000303"/>
    <property type="project" value="ComplexPortal"/>
</dbReference>
<dbReference type="GO" id="GO:0009410">
    <property type="term" value="P:response to xenobiotic stimulus"/>
    <property type="evidence" value="ECO:0000315"/>
    <property type="project" value="UniProtKB"/>
</dbReference>
<dbReference type="GO" id="GO:0006366">
    <property type="term" value="P:transcription by RNA polymerase II"/>
    <property type="evidence" value="ECO:0007669"/>
    <property type="project" value="Ensembl"/>
</dbReference>
<dbReference type="CDD" id="cd01178">
    <property type="entry name" value="IPT_NFAT"/>
    <property type="match status" value="1"/>
</dbReference>
<dbReference type="CDD" id="cd07881">
    <property type="entry name" value="RHD-n_NFAT"/>
    <property type="match status" value="1"/>
</dbReference>
<dbReference type="DisProt" id="DP01344"/>
<dbReference type="FunFam" id="2.60.40.10:FF:000040">
    <property type="entry name" value="Nuclear factor of activated T-cells, cytoplasmic, calcineurin-dependent 2"/>
    <property type="match status" value="1"/>
</dbReference>
<dbReference type="FunFam" id="2.60.40.340:FF:000001">
    <property type="entry name" value="Nuclear factor of activated T-cells, cytoplasmic, calcineurin-dependent 2"/>
    <property type="match status" value="1"/>
</dbReference>
<dbReference type="Gene3D" id="2.60.40.10">
    <property type="entry name" value="Immunoglobulins"/>
    <property type="match status" value="1"/>
</dbReference>
<dbReference type="Gene3D" id="2.60.40.340">
    <property type="entry name" value="Rel homology domain (RHD), DNA-binding domain"/>
    <property type="match status" value="1"/>
</dbReference>
<dbReference type="IDEAL" id="IID00470"/>
<dbReference type="InterPro" id="IPR013783">
    <property type="entry name" value="Ig-like_fold"/>
</dbReference>
<dbReference type="InterPro" id="IPR014756">
    <property type="entry name" value="Ig_E-set"/>
</dbReference>
<dbReference type="InterPro" id="IPR002909">
    <property type="entry name" value="IPT_dom"/>
</dbReference>
<dbReference type="InterPro" id="IPR008366">
    <property type="entry name" value="NFAT"/>
</dbReference>
<dbReference type="InterPro" id="IPR008967">
    <property type="entry name" value="p53-like_TF_DNA-bd_sf"/>
</dbReference>
<dbReference type="InterPro" id="IPR032397">
    <property type="entry name" value="RHD_dimer"/>
</dbReference>
<dbReference type="InterPro" id="IPR011539">
    <property type="entry name" value="RHD_DNA_bind_dom"/>
</dbReference>
<dbReference type="InterPro" id="IPR037059">
    <property type="entry name" value="RHD_DNA_bind_dom_sf"/>
</dbReference>
<dbReference type="PANTHER" id="PTHR12533">
    <property type="entry name" value="NFAT"/>
    <property type="match status" value="1"/>
</dbReference>
<dbReference type="PANTHER" id="PTHR12533:SF4">
    <property type="entry name" value="NUCLEAR FACTOR OF ACTIVATED T-CELLS, CYTOPLASMIC 2"/>
    <property type="match status" value="1"/>
</dbReference>
<dbReference type="Pfam" id="PF16179">
    <property type="entry name" value="RHD_dimer"/>
    <property type="match status" value="1"/>
</dbReference>
<dbReference type="Pfam" id="PF00554">
    <property type="entry name" value="RHD_DNA_bind"/>
    <property type="match status" value="1"/>
</dbReference>
<dbReference type="PRINTS" id="PR01789">
    <property type="entry name" value="NUCFACTORATC"/>
</dbReference>
<dbReference type="SMART" id="SM00429">
    <property type="entry name" value="IPT"/>
    <property type="match status" value="1"/>
</dbReference>
<dbReference type="SUPFAM" id="SSF81296">
    <property type="entry name" value="E set domains"/>
    <property type="match status" value="1"/>
</dbReference>
<dbReference type="SUPFAM" id="SSF49417">
    <property type="entry name" value="p53-like transcription factors"/>
    <property type="match status" value="1"/>
</dbReference>
<dbReference type="PROSITE" id="PS50254">
    <property type="entry name" value="REL_2"/>
    <property type="match status" value="1"/>
</dbReference>
<proteinExistence type="evidence at protein level"/>
<organism>
    <name type="scientific">Homo sapiens</name>
    <name type="common">Human</name>
    <dbReference type="NCBI Taxonomy" id="9606"/>
    <lineage>
        <taxon>Eukaryota</taxon>
        <taxon>Metazoa</taxon>
        <taxon>Chordata</taxon>
        <taxon>Craniata</taxon>
        <taxon>Vertebrata</taxon>
        <taxon>Euteleostomi</taxon>
        <taxon>Mammalia</taxon>
        <taxon>Eutheria</taxon>
        <taxon>Euarchontoglires</taxon>
        <taxon>Primates</taxon>
        <taxon>Haplorrhini</taxon>
        <taxon>Catarrhini</taxon>
        <taxon>Hominidae</taxon>
        <taxon>Homo</taxon>
    </lineage>
</organism>
<evidence type="ECO:0000250" key="1"/>
<evidence type="ECO:0000250" key="2">
    <source>
        <dbReference type="UniProtKB" id="Q60591"/>
    </source>
</evidence>
<evidence type="ECO:0000255" key="3">
    <source>
        <dbReference type="PROSITE-ProRule" id="PRU00265"/>
    </source>
</evidence>
<evidence type="ECO:0000256" key="4">
    <source>
        <dbReference type="SAM" id="MobiDB-lite"/>
    </source>
</evidence>
<evidence type="ECO:0000269" key="5">
    <source>
    </source>
</evidence>
<evidence type="ECO:0000269" key="6">
    <source>
    </source>
</evidence>
<evidence type="ECO:0000269" key="7">
    <source>
    </source>
</evidence>
<evidence type="ECO:0000269" key="8">
    <source>
    </source>
</evidence>
<evidence type="ECO:0000269" key="9">
    <source>
    </source>
</evidence>
<evidence type="ECO:0000269" key="10">
    <source>
    </source>
</evidence>
<evidence type="ECO:0000269" key="11">
    <source>
    </source>
</evidence>
<evidence type="ECO:0000269" key="12">
    <source>
    </source>
</evidence>
<evidence type="ECO:0000269" key="13">
    <source>
    </source>
</evidence>
<evidence type="ECO:0000303" key="14">
    <source>
    </source>
</evidence>
<evidence type="ECO:0000303" key="15">
    <source>
    </source>
</evidence>
<evidence type="ECO:0000303" key="16">
    <source>
    </source>
</evidence>
<evidence type="ECO:0000305" key="17"/>
<evidence type="ECO:0007744" key="18">
    <source>
        <dbReference type="PDB" id="3QRF"/>
    </source>
</evidence>
<evidence type="ECO:0007744" key="19">
    <source>
    </source>
</evidence>
<evidence type="ECO:0007744" key="20">
    <source>
    </source>
</evidence>
<evidence type="ECO:0007744" key="21">
    <source>
    </source>
</evidence>
<evidence type="ECO:0007744" key="22">
    <source>
    </source>
</evidence>
<evidence type="ECO:0007744" key="23">
    <source>
    </source>
</evidence>
<evidence type="ECO:0007829" key="24">
    <source>
        <dbReference type="PDB" id="1A02"/>
    </source>
</evidence>
<evidence type="ECO:0007829" key="25">
    <source>
        <dbReference type="PDB" id="1OWR"/>
    </source>
</evidence>
<evidence type="ECO:0007829" key="26">
    <source>
        <dbReference type="PDB" id="1P7H"/>
    </source>
</evidence>
<evidence type="ECO:0007829" key="27">
    <source>
        <dbReference type="PDB" id="2AS5"/>
    </source>
</evidence>
<evidence type="ECO:0007829" key="28">
    <source>
        <dbReference type="PDB" id="3QRF"/>
    </source>
</evidence>
<evidence type="ECO:0007829" key="29">
    <source>
        <dbReference type="PDB" id="8OW4"/>
    </source>
</evidence>
<evidence type="ECO:0007829" key="30">
    <source>
        <dbReference type="PDB" id="8R3F"/>
    </source>
</evidence>
<comment type="function">
    <text evidence="2 5 9 12">Plays a role in the inducible expression of cytokine genes in T-cells, especially in the induction of the IL-2, IL-3, IL-4, TNF-alpha or GM-CSF (PubMed:15790681). Promotes invasive migration through the activation of GPC6 expression and WNT5A signaling pathway (PubMed:21871017). Is involved in the negative regulation of chondrogenesis (PubMed:35789258). Recruited by AKAP5 to ORAI1 pore-forming subunit of CRAC channels in Ca(2+) signaling microdomains where store-operated Ca(2+) influx is coupled to calmodulin and calcineurin signaling and activation of NFAT-dependent transcriptional responses.</text>
</comment>
<comment type="subunit">
    <text evidence="2 5 7 8 10">Member of the multicomponent NFATC transcription complex that consists of at least two components, a pre-existing cytoplasmic component NFATC2 and an inducible nuclear component NFATC1. Other members such as NFATC4, NFATC3 or members of the activating protein-1 family, MAF, GATA4 and Cbp/p300 can also bind the complex. The phosphorylated form specifically interacts with XPO1; which mediates nuclear export. NFATC proteins bind to DNA as monomers. Interacts with NFATC2IP (By similarity). Interacts with FOXP3 (PubMed:15790681). Interacts with TBX21 ('Thr-303' phosphorylated form) (By similarity). Interacts with KAT2A (By similarity). Interacts with HOMER2 and HOMER3; this interaction competes with calcineurin/PPP3CA-binding and hence prevents NFATC2 dephosphorylation and activation (PubMed:18218901). Interacts with protein phosphatase PPP3CA/calcineurin A (PubMed:26248042). Interacts with AKAP5 (via leucine zipper domain); this is required for NFATC2/NFAT1 recruitment to CRAC channels.</text>
</comment>
<comment type="interaction">
    <interactant intactId="EBI-716258">
        <id>Q13469</id>
    </interactant>
    <interactant intactId="EBI-711855">
        <id>P16220</id>
        <label>CREB1</label>
    </interactant>
    <organismsDiffer>false</organismsDiffer>
    <experiments>2</experiments>
</comment>
<comment type="interaction">
    <interactant intactId="EBI-716258">
        <id>Q13469</id>
    </interactant>
    <interactant intactId="EBI-5323863">
        <id>Q5S007</id>
        <label>LRRK2</label>
    </interactant>
    <organismsDiffer>false</organismsDiffer>
    <experiments>3</experiments>
</comment>
<comment type="interaction">
    <interactant intactId="EBI-716258">
        <id>Q13469</id>
    </interactant>
    <interactant intactId="EBI-15637215">
        <id>Q08209-1</id>
        <label>PPP3CA</label>
    </interactant>
    <organismsDiffer>false</organismsDiffer>
    <experiments>2</experiments>
</comment>
<comment type="interaction">
    <interactant intactId="EBI-716258">
        <id>Q13469</id>
    </interactant>
    <interactant intactId="EBI-723510">
        <id>Q9UPT9</id>
        <label>USP22</label>
    </interactant>
    <organismsDiffer>false</organismsDiffer>
    <experiments>2</experiments>
</comment>
<comment type="interaction">
    <interactant intactId="EBI-716258">
        <id>Q13469</id>
    </interactant>
    <interactant intactId="EBI-1207633">
        <id>Q86Y07-1</id>
        <label>VRK2</label>
    </interactant>
    <organismsDiffer>false</organismsDiffer>
    <experiments>3</experiments>
</comment>
<comment type="interaction">
    <interactant intactId="EBI-716258">
        <id>Q13469</id>
    </interactant>
    <interactant intactId="EBI-1207636">
        <id>Q86Y07-2</id>
        <label>VRK2</label>
    </interactant>
    <organismsDiffer>false</organismsDiffer>
    <experiments>4</experiments>
</comment>
<comment type="interaction">
    <interactant intactId="EBI-10087113">
        <id>Q13469-2</id>
    </interactant>
    <interactant intactId="EBI-852823">
        <id>P05412</id>
        <label>JUN</label>
    </interactant>
    <organismsDiffer>false</organismsDiffer>
    <experiments>6</experiments>
</comment>
<comment type="subcellular location">
    <subcellularLocation>
        <location>Cytoplasm</location>
    </subcellularLocation>
    <subcellularLocation>
        <location>Nucleus</location>
    </subcellularLocation>
    <text>Cytoplasmic for the phosphorylated form and nuclear after activation that is controlled by calcineurin-mediated dephosphorylation. Rapid nuclear exit of NFATC is thought to be one mechanism by which cells distinguish between sustained and transient calcium signals. The subcellular localization of NFATC plays a key role in the regulation of gene transcription.</text>
</comment>
<comment type="alternative products">
    <event type="alternative splicing"/>
    <isoform>
        <id>Q13469-1</id>
        <name>1</name>
        <name>C</name>
        <name>NFATc2_IB_IIL</name>
        <sequence type="displayed"/>
    </isoform>
    <isoform>
        <id>Q13469-2</id>
        <name>2</name>
        <name>B</name>
        <sequence type="described" ref="VSP_005595"/>
    </isoform>
    <isoform>
        <id>Q13469-3</id>
        <name>3</name>
        <name>NFATc2_IA_IIL</name>
        <sequence type="described" ref="VSP_042757 VSP_005595"/>
    </isoform>
    <isoform>
        <id>Q13469-4</id>
        <name>4</name>
        <sequence type="described" ref="VSP_042757"/>
    </isoform>
    <isoform>
        <id>Q13469-5</id>
        <name>5</name>
        <sequence type="described" ref="VSP_055926 VSP_005595"/>
    </isoform>
    <text>Additional isoforms seem to exist.</text>
</comment>
<comment type="tissue specificity">
    <text evidence="13">Expressed in thymus, spleen, heart, testis, brain, placenta, muscle and pancreas. Isoform 1 is highly expressed in the small intestine, heart, testis, prostate, thymus, placenta and thyroid. Isoform 3 is highly expressed in stomach, uterus, placenta, trachea and thyroid.</text>
</comment>
<comment type="induction">
    <text>Inducibly expressed in T-lymphocytes upon activation of the T-cell receptor (TCR) complex. Induced after co-addition of phorbol 12-myristate 13-acetate (PMA) and ionomycin.</text>
</comment>
<comment type="domain">
    <text evidence="6">The 9aaTAD motif is a transactivation domain present in a large number of yeast and animal transcription factors.</text>
</comment>
<comment type="domain">
    <text evidence="1">Rel Similarity Domain (RSD) allows DNA-binding and cooperative interactions with AP1 factors.</text>
</comment>
<comment type="PTM">
    <text evidence="2">In resting cells, phosphorylated by NFATC-kinase on at least 18 sites in the 99-363 region. Upon cell stimulation, all these sites except Ser-243 are dephosphorylated by calcineurin. Dephosphorylation induces a conformational change that simultaneously exposes an NLS and masks an NES, which results in nuclear localization. Simultaneously, Ser-53 or Ser-56 is phosphorylated; which is required for full transcriptional activity.</text>
</comment>
<comment type="PTM">
    <text evidence="11">Ubiquitinated in endothelial cells by RNF213 downstream of the non-canonical Wnt signaling pathway, leading to its degradation by the proteasome.</text>
</comment>
<comment type="disease" evidence="12">
    <disease id="DI-06599">
        <name>Joint contractures, osteochondromas, and B-cell lymphoma</name>
        <acronym>JCOSL</acronym>
        <description>An autosomal recessive disorder characterized by musculoskeletal and hematopoietic issues. Affected individuals develop painless fixed joint contractures in early childhood, have osteochondromas, osteopenia, and can develop B-cell lymphomas.</description>
        <dbReference type="MIM" id="620232"/>
    </disease>
    <text>The disease may be caused by variants affecting the gene represented in this entry.</text>
</comment>
<comment type="online information" name="Atlas of Genetics and Cytogenetics in Oncology and Haematology">
    <link uri="https://atlasgeneticsoncology.org/gene/44004/NFATC2"/>
</comment>
<keyword id="KW-0002">3D-structure</keyword>
<keyword id="KW-0010">Activator</keyword>
<keyword id="KW-0025">Alternative splicing</keyword>
<keyword id="KW-0963">Cytoplasm</keyword>
<keyword id="KW-0238">DNA-binding</keyword>
<keyword id="KW-0539">Nucleus</keyword>
<keyword id="KW-0597">Phosphoprotein</keyword>
<keyword id="KW-1267">Proteomics identification</keyword>
<keyword id="KW-1185">Reference proteome</keyword>
<keyword id="KW-0677">Repeat</keyword>
<keyword id="KW-0804">Transcription</keyword>
<keyword id="KW-0805">Transcription regulation</keyword>
<keyword id="KW-0832">Ubl conjugation</keyword>